<organism>
    <name type="scientific">Aeromonas hydrophila subsp. hydrophila (strain ATCC 7966 / DSM 30187 / BCRC 13018 / CCUG 14551 / JCM 1027 / KCTC 2358 / NCIMB 9240 / NCTC 8049)</name>
    <dbReference type="NCBI Taxonomy" id="380703"/>
    <lineage>
        <taxon>Bacteria</taxon>
        <taxon>Pseudomonadati</taxon>
        <taxon>Pseudomonadota</taxon>
        <taxon>Gammaproteobacteria</taxon>
        <taxon>Aeromonadales</taxon>
        <taxon>Aeromonadaceae</taxon>
        <taxon>Aeromonas</taxon>
    </lineage>
</organism>
<protein>
    <recommendedName>
        <fullName evidence="1">Undecaprenyl-diphosphatase</fullName>
        <ecNumber evidence="1">3.6.1.27</ecNumber>
    </recommendedName>
    <alternativeName>
        <fullName evidence="1">Bacitracin resistance protein</fullName>
    </alternativeName>
    <alternativeName>
        <fullName evidence="1">Undecaprenyl pyrophosphate phosphatase</fullName>
    </alternativeName>
</protein>
<comment type="function">
    <text evidence="1">Catalyzes the dephosphorylation of undecaprenyl diphosphate (UPP). Confers resistance to bacitracin.</text>
</comment>
<comment type="catalytic activity">
    <reaction evidence="1">
        <text>di-trans,octa-cis-undecaprenyl diphosphate + H2O = di-trans,octa-cis-undecaprenyl phosphate + phosphate + H(+)</text>
        <dbReference type="Rhea" id="RHEA:28094"/>
        <dbReference type="ChEBI" id="CHEBI:15377"/>
        <dbReference type="ChEBI" id="CHEBI:15378"/>
        <dbReference type="ChEBI" id="CHEBI:43474"/>
        <dbReference type="ChEBI" id="CHEBI:58405"/>
        <dbReference type="ChEBI" id="CHEBI:60392"/>
        <dbReference type="EC" id="3.6.1.27"/>
    </reaction>
</comment>
<comment type="subcellular location">
    <subcellularLocation>
        <location evidence="1">Cell inner membrane</location>
        <topology evidence="1">Multi-pass membrane protein</topology>
    </subcellularLocation>
</comment>
<comment type="miscellaneous">
    <text>Bacitracin is thought to be involved in the inhibition of peptidoglycan synthesis by sequestering undecaprenyl diphosphate, thereby reducing the pool of lipid carrier available.</text>
</comment>
<comment type="similarity">
    <text evidence="1">Belongs to the UppP family.</text>
</comment>
<gene>
    <name evidence="1" type="primary">uppP</name>
    <name type="ordered locus">AHA_4108</name>
</gene>
<keyword id="KW-0046">Antibiotic resistance</keyword>
<keyword id="KW-0997">Cell inner membrane</keyword>
<keyword id="KW-1003">Cell membrane</keyword>
<keyword id="KW-0133">Cell shape</keyword>
<keyword id="KW-0961">Cell wall biogenesis/degradation</keyword>
<keyword id="KW-0378">Hydrolase</keyword>
<keyword id="KW-0472">Membrane</keyword>
<keyword id="KW-0573">Peptidoglycan synthesis</keyword>
<keyword id="KW-1185">Reference proteome</keyword>
<keyword id="KW-0812">Transmembrane</keyword>
<keyword id="KW-1133">Transmembrane helix</keyword>
<proteinExistence type="inferred from homology"/>
<dbReference type="EC" id="3.6.1.27" evidence="1"/>
<dbReference type="EMBL" id="CP000462">
    <property type="protein sequence ID" value="ABK38763.1"/>
    <property type="molecule type" value="Genomic_DNA"/>
</dbReference>
<dbReference type="RefSeq" id="YP_858532.1">
    <property type="nucleotide sequence ID" value="NC_008570.1"/>
</dbReference>
<dbReference type="SMR" id="A0KQI1"/>
<dbReference type="STRING" id="380703.AHA_4108"/>
<dbReference type="EnsemblBacteria" id="ABK38763">
    <property type="protein sequence ID" value="ABK38763"/>
    <property type="gene ID" value="AHA_4108"/>
</dbReference>
<dbReference type="GeneID" id="4488125"/>
<dbReference type="KEGG" id="aha:AHA_4108"/>
<dbReference type="PATRIC" id="fig|380703.7.peg.4065"/>
<dbReference type="eggNOG" id="COG1968">
    <property type="taxonomic scope" value="Bacteria"/>
</dbReference>
<dbReference type="HOGENOM" id="CLU_060296_2_0_6"/>
<dbReference type="OrthoDB" id="9808289at2"/>
<dbReference type="Proteomes" id="UP000000756">
    <property type="component" value="Chromosome"/>
</dbReference>
<dbReference type="GO" id="GO:0005886">
    <property type="term" value="C:plasma membrane"/>
    <property type="evidence" value="ECO:0007669"/>
    <property type="project" value="UniProtKB-SubCell"/>
</dbReference>
<dbReference type="GO" id="GO:0050380">
    <property type="term" value="F:undecaprenyl-diphosphatase activity"/>
    <property type="evidence" value="ECO:0007669"/>
    <property type="project" value="UniProtKB-UniRule"/>
</dbReference>
<dbReference type="GO" id="GO:0071555">
    <property type="term" value="P:cell wall organization"/>
    <property type="evidence" value="ECO:0007669"/>
    <property type="project" value="UniProtKB-KW"/>
</dbReference>
<dbReference type="GO" id="GO:0009252">
    <property type="term" value="P:peptidoglycan biosynthetic process"/>
    <property type="evidence" value="ECO:0007669"/>
    <property type="project" value="UniProtKB-KW"/>
</dbReference>
<dbReference type="GO" id="GO:0008360">
    <property type="term" value="P:regulation of cell shape"/>
    <property type="evidence" value="ECO:0007669"/>
    <property type="project" value="UniProtKB-KW"/>
</dbReference>
<dbReference type="GO" id="GO:0046677">
    <property type="term" value="P:response to antibiotic"/>
    <property type="evidence" value="ECO:0007669"/>
    <property type="project" value="UniProtKB-UniRule"/>
</dbReference>
<dbReference type="HAMAP" id="MF_01006">
    <property type="entry name" value="Undec_diphosphatase"/>
    <property type="match status" value="1"/>
</dbReference>
<dbReference type="InterPro" id="IPR003824">
    <property type="entry name" value="UppP"/>
</dbReference>
<dbReference type="NCBIfam" id="NF001388">
    <property type="entry name" value="PRK00281.1-1"/>
    <property type="match status" value="1"/>
</dbReference>
<dbReference type="NCBIfam" id="NF001389">
    <property type="entry name" value="PRK00281.1-2"/>
    <property type="match status" value="1"/>
</dbReference>
<dbReference type="NCBIfam" id="NF001390">
    <property type="entry name" value="PRK00281.1-4"/>
    <property type="match status" value="1"/>
</dbReference>
<dbReference type="NCBIfam" id="TIGR00753">
    <property type="entry name" value="undec_PP_bacA"/>
    <property type="match status" value="1"/>
</dbReference>
<dbReference type="PANTHER" id="PTHR30622">
    <property type="entry name" value="UNDECAPRENYL-DIPHOSPHATASE"/>
    <property type="match status" value="1"/>
</dbReference>
<dbReference type="PANTHER" id="PTHR30622:SF3">
    <property type="entry name" value="UNDECAPRENYL-DIPHOSPHATASE"/>
    <property type="match status" value="1"/>
</dbReference>
<dbReference type="Pfam" id="PF02673">
    <property type="entry name" value="BacA"/>
    <property type="match status" value="1"/>
</dbReference>
<reference key="1">
    <citation type="journal article" date="2006" name="J. Bacteriol.">
        <title>Genome sequence of Aeromonas hydrophila ATCC 7966T: jack of all trades.</title>
        <authorList>
            <person name="Seshadri R."/>
            <person name="Joseph S.W."/>
            <person name="Chopra A.K."/>
            <person name="Sha J."/>
            <person name="Shaw J."/>
            <person name="Graf J."/>
            <person name="Haft D.H."/>
            <person name="Wu M."/>
            <person name="Ren Q."/>
            <person name="Rosovitz M.J."/>
            <person name="Madupu R."/>
            <person name="Tallon L."/>
            <person name="Kim M."/>
            <person name="Jin S."/>
            <person name="Vuong H."/>
            <person name="Stine O.C."/>
            <person name="Ali A."/>
            <person name="Horneman A.J."/>
            <person name="Heidelberg J.F."/>
        </authorList>
    </citation>
    <scope>NUCLEOTIDE SEQUENCE [LARGE SCALE GENOMIC DNA]</scope>
    <source>
        <strain>ATCC 7966 / DSM 30187 / BCRC 13018 / CCUG 14551 / JCM 1027 / KCTC 2358 / NCIMB 9240 / NCTC 8049</strain>
    </source>
</reference>
<sequence length="271" mass="29277">MTESYALFVAFVLGIVEGLTEFLPVSSTGHMIIVGHLLGFDGPKAATFEVVIQMGSILAVVAVFWRRLFGLIGIHFGQKPAQGHATLSLVHIILGMLPAVIIGLAIHSWIKAHLFGPQTVMYALVAGGILLIIAEKFRPAVRSETLDDISYKQALGIGLFQCLALWPGFSRSGATISGGMLMGISRQAAAEFSFILAVPMMVAASGLDLYKSRDLLSMADFPMFAVGFITAFVVAMIAIKTFLALIRRLDFIPFAIYRFVVAFAVYLVFVA</sequence>
<name>UPPP_AERHH</name>
<feature type="chain" id="PRO_0000290678" description="Undecaprenyl-diphosphatase">
    <location>
        <begin position="1"/>
        <end position="271"/>
    </location>
</feature>
<feature type="transmembrane region" description="Helical" evidence="1">
    <location>
        <begin position="5"/>
        <end position="25"/>
    </location>
</feature>
<feature type="transmembrane region" description="Helical" evidence="1">
    <location>
        <begin position="45"/>
        <end position="65"/>
    </location>
</feature>
<feature type="transmembrane region" description="Helical" evidence="1">
    <location>
        <begin position="86"/>
        <end position="106"/>
    </location>
</feature>
<feature type="transmembrane region" description="Helical" evidence="1">
    <location>
        <begin position="114"/>
        <end position="134"/>
    </location>
</feature>
<feature type="transmembrane region" description="Helical" evidence="1">
    <location>
        <begin position="149"/>
        <end position="169"/>
    </location>
</feature>
<feature type="transmembrane region" description="Helical" evidence="1">
    <location>
        <begin position="189"/>
        <end position="209"/>
    </location>
</feature>
<feature type="transmembrane region" description="Helical" evidence="1">
    <location>
        <begin position="226"/>
        <end position="246"/>
    </location>
</feature>
<feature type="transmembrane region" description="Helical" evidence="1">
    <location>
        <begin position="251"/>
        <end position="271"/>
    </location>
</feature>
<evidence type="ECO:0000255" key="1">
    <source>
        <dbReference type="HAMAP-Rule" id="MF_01006"/>
    </source>
</evidence>
<accession>A0KQI1</accession>